<organism>
    <name type="scientific">Salmonella typhimurium (strain LT2 / SGSC1412 / ATCC 700720)</name>
    <dbReference type="NCBI Taxonomy" id="99287"/>
    <lineage>
        <taxon>Bacteria</taxon>
        <taxon>Pseudomonadati</taxon>
        <taxon>Pseudomonadota</taxon>
        <taxon>Gammaproteobacteria</taxon>
        <taxon>Enterobacterales</taxon>
        <taxon>Enterobacteriaceae</taxon>
        <taxon>Salmonella</taxon>
    </lineage>
</organism>
<accession>P33027</accession>
<keyword id="KW-0997">Cell inner membrane</keyword>
<keyword id="KW-1003">Cell membrane</keyword>
<keyword id="KW-0472">Membrane</keyword>
<keyword id="KW-1185">Reference proteome</keyword>
<keyword id="KW-0762">Sugar transport</keyword>
<keyword id="KW-0812">Transmembrane</keyword>
<keyword id="KW-1133">Transmembrane helix</keyword>
<keyword id="KW-0813">Transport</keyword>
<comment type="function">
    <text evidence="1">Involved in the efflux of sugars. The physiological role may be the detoxification of non-metabolizable sugar analogs. Can transport lactose and glucose (By similarity).</text>
</comment>
<comment type="subcellular location">
    <subcellularLocation>
        <location evidence="3">Cell inner membrane</location>
        <topology evidence="3">Multi-pass membrane protein</topology>
    </subcellularLocation>
</comment>
<comment type="similarity">
    <text evidence="3">Belongs to the major facilitator superfamily. Set transporter family.</text>
</comment>
<dbReference type="EMBL" id="AE006468">
    <property type="protein sequence ID" value="AAL21111.1"/>
    <property type="molecule type" value="Genomic_DNA"/>
</dbReference>
<dbReference type="EMBL" id="X14243">
    <property type="status" value="NOT_ANNOTATED_CDS"/>
    <property type="molecule type" value="Genomic_DNA"/>
</dbReference>
<dbReference type="RefSeq" id="NP_461152.1">
    <property type="nucleotide sequence ID" value="NC_003197.2"/>
</dbReference>
<dbReference type="RefSeq" id="WP_000551937.1">
    <property type="nucleotide sequence ID" value="NC_003197.2"/>
</dbReference>
<dbReference type="SMR" id="P33027"/>
<dbReference type="STRING" id="99287.STM2207"/>
<dbReference type="PaxDb" id="99287-STM2207"/>
<dbReference type="GeneID" id="1253729"/>
<dbReference type="KEGG" id="stm:STM2207"/>
<dbReference type="PATRIC" id="fig|99287.12.peg.2337"/>
<dbReference type="HOGENOM" id="CLU_055598_3_0_6"/>
<dbReference type="OMA" id="PSMRKEP"/>
<dbReference type="PhylomeDB" id="P33027"/>
<dbReference type="BioCyc" id="SENT99287:STM2207-MONOMER"/>
<dbReference type="Proteomes" id="UP000001014">
    <property type="component" value="Chromosome"/>
</dbReference>
<dbReference type="GO" id="GO:0005886">
    <property type="term" value="C:plasma membrane"/>
    <property type="evidence" value="ECO:0000318"/>
    <property type="project" value="GO_Central"/>
</dbReference>
<dbReference type="GO" id="GO:0005351">
    <property type="term" value="F:carbohydrate:proton symporter activity"/>
    <property type="evidence" value="ECO:0000318"/>
    <property type="project" value="GO_Central"/>
</dbReference>
<dbReference type="GO" id="GO:0036448">
    <property type="term" value="P:cellular response to glucose-phosphate stress"/>
    <property type="evidence" value="ECO:0000318"/>
    <property type="project" value="GO_Central"/>
</dbReference>
<dbReference type="GO" id="GO:1904659">
    <property type="term" value="P:D-glucose transmembrane transport"/>
    <property type="evidence" value="ECO:0000318"/>
    <property type="project" value="GO_Central"/>
</dbReference>
<dbReference type="GO" id="GO:0015767">
    <property type="term" value="P:lactose transport"/>
    <property type="evidence" value="ECO:0000318"/>
    <property type="project" value="GO_Central"/>
</dbReference>
<dbReference type="CDD" id="cd17471">
    <property type="entry name" value="MFS_Set"/>
    <property type="match status" value="1"/>
</dbReference>
<dbReference type="FunFam" id="1.20.1250.20:FF:000125">
    <property type="entry name" value="Sugar efflux transporter SetB"/>
    <property type="match status" value="1"/>
</dbReference>
<dbReference type="FunFam" id="1.20.1250.20:FF:000151">
    <property type="entry name" value="Sugar efflux transporter SetB"/>
    <property type="match status" value="1"/>
</dbReference>
<dbReference type="Gene3D" id="1.20.1250.20">
    <property type="entry name" value="MFS general substrate transporter like domains"/>
    <property type="match status" value="2"/>
</dbReference>
<dbReference type="InterPro" id="IPR011701">
    <property type="entry name" value="MFS"/>
</dbReference>
<dbReference type="InterPro" id="IPR020846">
    <property type="entry name" value="MFS_dom"/>
</dbReference>
<dbReference type="InterPro" id="IPR036259">
    <property type="entry name" value="MFS_trans_sf"/>
</dbReference>
<dbReference type="InterPro" id="IPR004750">
    <property type="entry name" value="Sugar_efflux"/>
</dbReference>
<dbReference type="NCBIfam" id="TIGR00899">
    <property type="entry name" value="2A0120"/>
    <property type="match status" value="1"/>
</dbReference>
<dbReference type="NCBIfam" id="NF011587">
    <property type="entry name" value="PRK15011.1"/>
    <property type="match status" value="1"/>
</dbReference>
<dbReference type="PANTHER" id="PTHR23535">
    <property type="entry name" value="SUGAR EFFLUX TRANSPORTER A-RELATED"/>
    <property type="match status" value="1"/>
</dbReference>
<dbReference type="PANTHER" id="PTHR23535:SF2">
    <property type="entry name" value="SUGAR EFFLUX TRANSPORTER A-RELATED"/>
    <property type="match status" value="1"/>
</dbReference>
<dbReference type="Pfam" id="PF07690">
    <property type="entry name" value="MFS_1"/>
    <property type="match status" value="1"/>
</dbReference>
<dbReference type="SUPFAM" id="SSF103473">
    <property type="entry name" value="MFS general substrate transporter"/>
    <property type="match status" value="1"/>
</dbReference>
<dbReference type="PROSITE" id="PS50850">
    <property type="entry name" value="MFS"/>
    <property type="match status" value="1"/>
</dbReference>
<gene>
    <name type="primary">setB</name>
    <name type="ordered locus">STM2207</name>
</gene>
<protein>
    <recommendedName>
        <fullName>Sugar efflux transporter B</fullName>
    </recommendedName>
</protein>
<evidence type="ECO:0000250" key="1"/>
<evidence type="ECO:0000255" key="2"/>
<evidence type="ECO:0000305" key="3"/>
<sequence length="393" mass="42650">MHNSPAAAAPKSFDLTSTAFLIVAFLTGIAGALQTPTLSIFLTDEVHARPGMVGFFFTGSAVIGIIVSQFLAGRSDKKGDRKKLIVFCCVLGMLACVLFAWNRNYFILLFIGVFLSSFGSTANPQMFALAREHADRTGREAVMFSSILRAQVSLAWVIGPPLAYALAMGFSFTVMYLSAAVAFIVCGVMVWFFLPSMRKDAPLATGTLEAPRRNRRDTLLLFVICTLMWGTNSLYIINMPLFIINELHLPEKLAGVMMGTAAGLEIPTMLIAGYFAKRLGKRLLMCIAVVAGLCFYVGMLLAHAPATLLGLQLLNAIYIGILGGIGMLYFQDLMPGQAGSATTLYTNTIRVGWIIAGSLAGIAAEIWNYHAVFWFALVMIVATMFCLARIKDV</sequence>
<name>SETB_SALTY</name>
<proteinExistence type="inferred from homology"/>
<feature type="chain" id="PRO_0000209361" description="Sugar efflux transporter B">
    <location>
        <begin position="1"/>
        <end position="393"/>
    </location>
</feature>
<feature type="transmembrane region" description="Helical" evidence="2">
    <location>
        <begin position="13"/>
        <end position="33"/>
    </location>
</feature>
<feature type="transmembrane region" description="Helical" evidence="2">
    <location>
        <begin position="52"/>
        <end position="72"/>
    </location>
</feature>
<feature type="transmembrane region" description="Helical" evidence="2">
    <location>
        <begin position="84"/>
        <end position="101"/>
    </location>
</feature>
<feature type="transmembrane region" description="Helical" evidence="2">
    <location>
        <begin position="105"/>
        <end position="124"/>
    </location>
</feature>
<feature type="transmembrane region" description="Helical" evidence="2">
    <location>
        <begin position="152"/>
        <end position="172"/>
    </location>
</feature>
<feature type="transmembrane region" description="Helical" evidence="2">
    <location>
        <begin position="174"/>
        <end position="194"/>
    </location>
</feature>
<feature type="transmembrane region" description="Helical" evidence="2">
    <location>
        <begin position="219"/>
        <end position="239"/>
    </location>
</feature>
<feature type="transmembrane region" description="Helical" evidence="2">
    <location>
        <begin position="253"/>
        <end position="273"/>
    </location>
</feature>
<feature type="transmembrane region" description="Helical" evidence="2">
    <location>
        <begin position="283"/>
        <end position="303"/>
    </location>
</feature>
<feature type="transmembrane region" description="Helical" evidence="2">
    <location>
        <begin position="308"/>
        <end position="328"/>
    </location>
</feature>
<feature type="transmembrane region" description="Helical" evidence="2">
    <location>
        <begin position="344"/>
        <end position="364"/>
    </location>
</feature>
<feature type="transmembrane region" description="Helical" evidence="2">
    <location>
        <begin position="366"/>
        <end position="386"/>
    </location>
</feature>
<reference key="1">
    <citation type="journal article" date="2001" name="Nature">
        <title>Complete genome sequence of Salmonella enterica serovar Typhimurium LT2.</title>
        <authorList>
            <person name="McClelland M."/>
            <person name="Sanderson K.E."/>
            <person name="Spieth J."/>
            <person name="Clifton S.W."/>
            <person name="Latreille P."/>
            <person name="Courtney L."/>
            <person name="Porwollik S."/>
            <person name="Ali J."/>
            <person name="Dante M."/>
            <person name="Du F."/>
            <person name="Hou S."/>
            <person name="Layman D."/>
            <person name="Leonard S."/>
            <person name="Nguyen C."/>
            <person name="Scott K."/>
            <person name="Holmes A."/>
            <person name="Grewal N."/>
            <person name="Mulvaney E."/>
            <person name="Ryan E."/>
            <person name="Sun H."/>
            <person name="Florea L."/>
            <person name="Miller W."/>
            <person name="Stoneking T."/>
            <person name="Nhan M."/>
            <person name="Waterston R."/>
            <person name="Wilson R.K."/>
        </authorList>
    </citation>
    <scope>NUCLEOTIDE SEQUENCE [LARGE SCALE GENOMIC DNA]</scope>
    <source>
        <strain>LT2 / SGSC1412 / ATCC 700720</strain>
    </source>
</reference>
<reference key="2">
    <citation type="journal article" date="1989" name="Mol. Gen. Genet.">
        <title>The PEP: fructose phosphotransferase system in Salmonella typhimurium: FPr combines enzyme IIIFru and pseudo-HPr activities.</title>
        <authorList>
            <person name="Geerse R.H."/>
            <person name="Izzo F."/>
            <person name="Postma P.W."/>
        </authorList>
    </citation>
    <scope>NUCLEOTIDE SEQUENCE [GENOMIC DNA] OF 1-22</scope>
</reference>